<feature type="chain" id="PRO_0000092589" description="ATP-dependent lipid A-core flippase">
    <location>
        <begin position="1"/>
        <end position="621"/>
    </location>
</feature>
<feature type="transmembrane region" description="Helical" evidence="1">
    <location>
        <begin position="32"/>
        <end position="52"/>
    </location>
</feature>
<feature type="transmembrane region" description="Helical" evidence="1">
    <location>
        <begin position="91"/>
        <end position="111"/>
    </location>
</feature>
<feature type="transmembrane region" description="Helical" evidence="1">
    <location>
        <begin position="192"/>
        <end position="212"/>
    </location>
</feature>
<feature type="transmembrane region" description="Helical" evidence="1">
    <location>
        <begin position="286"/>
        <end position="306"/>
    </location>
</feature>
<feature type="transmembrane region" description="Helical" evidence="1">
    <location>
        <begin position="312"/>
        <end position="332"/>
    </location>
</feature>
<feature type="domain" description="ABC transmembrane type-1" evidence="1">
    <location>
        <begin position="33"/>
        <end position="344"/>
    </location>
</feature>
<feature type="domain" description="ABC transporter" evidence="1">
    <location>
        <begin position="378"/>
        <end position="611"/>
    </location>
</feature>
<feature type="binding site" evidence="1">
    <location>
        <begin position="410"/>
        <end position="417"/>
    </location>
    <ligand>
        <name>ATP</name>
        <dbReference type="ChEBI" id="CHEBI:30616"/>
    </ligand>
</feature>
<evidence type="ECO:0000255" key="1">
    <source>
        <dbReference type="HAMAP-Rule" id="MF_01703"/>
    </source>
</evidence>
<sequence length="621" mass="68754">MIEKLTFGLFKKEDARSFMRLMAYVRPYKIRIVAALIAIFGVAATESYLAAFIAPLINHGFSAPAAPPELSAAAGILSTLQNWREQFTYMVWGTENKIWTVPLFLIILVVIRGICRFTSTYLMTWVSVMTISKIRKDMFAKMLTLSSRYHQETPSGTVLMNMLNLTEQSVSNASDIFTVLTRDTMIVTGLTIVLLYLNWQLSLIVVLMFPLLSLLSRYYRDRLKHVISDSQKSIGTMNNVIAETHQGHRVVKLFNGQAQAANRFDAINRTIVRLSKKITQATAAHSPFSELIASIALAVVIFIALWQSQNGYTTIGEFMAFIVAMLQMYAPIKSLANISIPMQTMFLAADGVCAFLDTPPEQDKGTLAPQRVEGRISFRNVDVEYRSDGIKALDGFNLDIRQGERVALVGRSGSGKSTVVNLLPRFVEPSAGNICIDGIDIADIKLDCLRAQFALVSQDVFLFDDTLFENVRYSRPDAGEAEVLSALQAANLQSLIDASPLGLHQPIGSNGSNLSGGQRQRVAIARAILKDAPILLLDEATSALDNESERLVQQALERLMENRTGIIVAHRLTTIEGADRIIVMDDGKIIEQGTHEQLMSQNGYYTMLRNISNKDAAVRTA</sequence>
<gene>
    <name evidence="1" type="primary">msbA</name>
    <name type="ordered locus">NMA0535</name>
</gene>
<dbReference type="EC" id="7.5.2.6" evidence="1"/>
<dbReference type="EMBL" id="AL157959">
    <property type="protein sequence ID" value="CAM07812.1"/>
    <property type="molecule type" value="Genomic_DNA"/>
</dbReference>
<dbReference type="PIR" id="H81971">
    <property type="entry name" value="H81971"/>
</dbReference>
<dbReference type="RefSeq" id="WP_002247090.1">
    <property type="nucleotide sequence ID" value="NC_003116.1"/>
</dbReference>
<dbReference type="SMR" id="Q9JW59"/>
<dbReference type="EnsemblBacteria" id="CAM07812">
    <property type="protein sequence ID" value="CAM07812"/>
    <property type="gene ID" value="NMA0535"/>
</dbReference>
<dbReference type="KEGG" id="nma:NMA0535"/>
<dbReference type="HOGENOM" id="CLU_000604_84_3_4"/>
<dbReference type="Proteomes" id="UP000000626">
    <property type="component" value="Chromosome"/>
</dbReference>
<dbReference type="GO" id="GO:0005886">
    <property type="term" value="C:plasma membrane"/>
    <property type="evidence" value="ECO:0007669"/>
    <property type="project" value="UniProtKB-SubCell"/>
</dbReference>
<dbReference type="GO" id="GO:0015421">
    <property type="term" value="F:ABC-type oligopeptide transporter activity"/>
    <property type="evidence" value="ECO:0007669"/>
    <property type="project" value="TreeGrafter"/>
</dbReference>
<dbReference type="GO" id="GO:0005524">
    <property type="term" value="F:ATP binding"/>
    <property type="evidence" value="ECO:0007669"/>
    <property type="project" value="UniProtKB-KW"/>
</dbReference>
<dbReference type="GO" id="GO:0016887">
    <property type="term" value="F:ATP hydrolysis activity"/>
    <property type="evidence" value="ECO:0007669"/>
    <property type="project" value="InterPro"/>
</dbReference>
<dbReference type="GO" id="GO:0034040">
    <property type="term" value="F:ATPase-coupled lipid transmembrane transporter activity"/>
    <property type="evidence" value="ECO:0007669"/>
    <property type="project" value="InterPro"/>
</dbReference>
<dbReference type="CDD" id="cd18552">
    <property type="entry name" value="ABC_6TM_MsbA_like"/>
    <property type="match status" value="1"/>
</dbReference>
<dbReference type="CDD" id="cd03251">
    <property type="entry name" value="ABCC_MsbA"/>
    <property type="match status" value="1"/>
</dbReference>
<dbReference type="FunFam" id="3.40.50.300:FF:001001">
    <property type="entry name" value="Multidrug ABC transporter ATP-binding protein"/>
    <property type="match status" value="1"/>
</dbReference>
<dbReference type="Gene3D" id="1.20.1560.10">
    <property type="entry name" value="ABC transporter type 1, transmembrane domain"/>
    <property type="match status" value="1"/>
</dbReference>
<dbReference type="Gene3D" id="3.40.50.300">
    <property type="entry name" value="P-loop containing nucleotide triphosphate hydrolases"/>
    <property type="match status" value="1"/>
</dbReference>
<dbReference type="InterPro" id="IPR003593">
    <property type="entry name" value="AAA+_ATPase"/>
</dbReference>
<dbReference type="InterPro" id="IPR011527">
    <property type="entry name" value="ABC1_TM_dom"/>
</dbReference>
<dbReference type="InterPro" id="IPR036640">
    <property type="entry name" value="ABC1_TM_sf"/>
</dbReference>
<dbReference type="InterPro" id="IPR003439">
    <property type="entry name" value="ABC_transporter-like_ATP-bd"/>
</dbReference>
<dbReference type="InterPro" id="IPR017871">
    <property type="entry name" value="ABC_transporter-like_CS"/>
</dbReference>
<dbReference type="InterPro" id="IPR011917">
    <property type="entry name" value="ABC_transpr_lipidA"/>
</dbReference>
<dbReference type="InterPro" id="IPR027417">
    <property type="entry name" value="P-loop_NTPase"/>
</dbReference>
<dbReference type="InterPro" id="IPR039421">
    <property type="entry name" value="Type_1_exporter"/>
</dbReference>
<dbReference type="NCBIfam" id="TIGR02203">
    <property type="entry name" value="MsbA_lipidA"/>
    <property type="match status" value="1"/>
</dbReference>
<dbReference type="PANTHER" id="PTHR43394:SF1">
    <property type="entry name" value="ATP-BINDING CASSETTE SUB-FAMILY B MEMBER 10, MITOCHONDRIAL"/>
    <property type="match status" value="1"/>
</dbReference>
<dbReference type="PANTHER" id="PTHR43394">
    <property type="entry name" value="ATP-DEPENDENT PERMEASE MDL1, MITOCHONDRIAL"/>
    <property type="match status" value="1"/>
</dbReference>
<dbReference type="Pfam" id="PF00664">
    <property type="entry name" value="ABC_membrane"/>
    <property type="match status" value="1"/>
</dbReference>
<dbReference type="Pfam" id="PF00005">
    <property type="entry name" value="ABC_tran"/>
    <property type="match status" value="1"/>
</dbReference>
<dbReference type="SMART" id="SM00382">
    <property type="entry name" value="AAA"/>
    <property type="match status" value="1"/>
</dbReference>
<dbReference type="SUPFAM" id="SSF90123">
    <property type="entry name" value="ABC transporter transmembrane region"/>
    <property type="match status" value="1"/>
</dbReference>
<dbReference type="SUPFAM" id="SSF52540">
    <property type="entry name" value="P-loop containing nucleoside triphosphate hydrolases"/>
    <property type="match status" value="1"/>
</dbReference>
<dbReference type="PROSITE" id="PS50929">
    <property type="entry name" value="ABC_TM1F"/>
    <property type="match status" value="1"/>
</dbReference>
<dbReference type="PROSITE" id="PS00211">
    <property type="entry name" value="ABC_TRANSPORTER_1"/>
    <property type="match status" value="1"/>
</dbReference>
<dbReference type="PROSITE" id="PS50893">
    <property type="entry name" value="ABC_TRANSPORTER_2"/>
    <property type="match status" value="1"/>
</dbReference>
<dbReference type="PROSITE" id="PS51239">
    <property type="entry name" value="MSBA"/>
    <property type="match status" value="1"/>
</dbReference>
<reference key="1">
    <citation type="journal article" date="2000" name="Nature">
        <title>Complete DNA sequence of a serogroup A strain of Neisseria meningitidis Z2491.</title>
        <authorList>
            <person name="Parkhill J."/>
            <person name="Achtman M."/>
            <person name="James K.D."/>
            <person name="Bentley S.D."/>
            <person name="Churcher C.M."/>
            <person name="Klee S.R."/>
            <person name="Morelli G."/>
            <person name="Basham D."/>
            <person name="Brown D."/>
            <person name="Chillingworth T."/>
            <person name="Davies R.M."/>
            <person name="Davis P."/>
            <person name="Devlin K."/>
            <person name="Feltwell T."/>
            <person name="Hamlin N."/>
            <person name="Holroyd S."/>
            <person name="Jagels K."/>
            <person name="Leather S."/>
            <person name="Moule S."/>
            <person name="Mungall K.L."/>
            <person name="Quail M.A."/>
            <person name="Rajandream M.A."/>
            <person name="Rutherford K.M."/>
            <person name="Simmonds M."/>
            <person name="Skelton J."/>
            <person name="Whitehead S."/>
            <person name="Spratt B.G."/>
            <person name="Barrell B.G."/>
        </authorList>
    </citation>
    <scope>NUCLEOTIDE SEQUENCE [LARGE SCALE GENOMIC DNA]</scope>
    <source>
        <strain>DSM 15465 / Z2491</strain>
    </source>
</reference>
<comment type="function">
    <text evidence="1">Involved in lipopolysaccharide (LPS) biosynthesis. Translocates lipid A-core from the inner to the outer leaflet of the inner membrane. Transmembrane domains (TMD) form a pore in the inner membrane and the ATP-binding domain (NBD) is responsible for energy generation.</text>
</comment>
<comment type="catalytic activity">
    <reaction evidence="1">
        <text>ATP + H2O + lipid A-core oligosaccharideSide 1 = ADP + phosphate + lipid A-core oligosaccharideSide 2.</text>
        <dbReference type="EC" id="7.5.2.6"/>
    </reaction>
</comment>
<comment type="subunit">
    <text evidence="1">Homodimer.</text>
</comment>
<comment type="subcellular location">
    <subcellularLocation>
        <location evidence="1">Cell inner membrane</location>
        <topology evidence="1">Multi-pass membrane protein</topology>
    </subcellularLocation>
</comment>
<comment type="domain">
    <text evidence="1">In MsbA the ATP-binding domain (NBD) and the transmembrane domain (TMD) are fused.</text>
</comment>
<comment type="similarity">
    <text evidence="1">Belongs to the ABC transporter superfamily. Lipid exporter (TC 3.A.1.106) family.</text>
</comment>
<proteinExistence type="inferred from homology"/>
<keyword id="KW-0067">ATP-binding</keyword>
<keyword id="KW-0997">Cell inner membrane</keyword>
<keyword id="KW-1003">Cell membrane</keyword>
<keyword id="KW-0445">Lipid transport</keyword>
<keyword id="KW-0472">Membrane</keyword>
<keyword id="KW-0547">Nucleotide-binding</keyword>
<keyword id="KW-1278">Translocase</keyword>
<keyword id="KW-0812">Transmembrane</keyword>
<keyword id="KW-1133">Transmembrane helix</keyword>
<keyword id="KW-0813">Transport</keyword>
<protein>
    <recommendedName>
        <fullName evidence="1">ATP-dependent lipid A-core flippase</fullName>
        <ecNumber evidence="1">7.5.2.6</ecNumber>
    </recommendedName>
    <alternativeName>
        <fullName evidence="1">Lipid A export ATP-binding/permease protein MsbA</fullName>
    </alternativeName>
</protein>
<name>MSBA_NEIMA</name>
<accession>Q9JW59</accession>
<accession>A1IPY7</accession>
<organism>
    <name type="scientific">Neisseria meningitidis serogroup A / serotype 4A (strain DSM 15465 / Z2491)</name>
    <dbReference type="NCBI Taxonomy" id="122587"/>
    <lineage>
        <taxon>Bacteria</taxon>
        <taxon>Pseudomonadati</taxon>
        <taxon>Pseudomonadota</taxon>
        <taxon>Betaproteobacteria</taxon>
        <taxon>Neisseriales</taxon>
        <taxon>Neisseriaceae</taxon>
        <taxon>Neisseria</taxon>
    </lineage>
</organism>